<comment type="function">
    <text evidence="1">Catalyzes the irreversible transfer of a propylamine group from the amino donor S-adenosylmethioninamine (decarboxy-AdoMet) to putrescine (1,4-diaminobutane) to yield spermidine.</text>
</comment>
<comment type="catalytic activity">
    <reaction evidence="1">
        <text>S-adenosyl 3-(methylsulfanyl)propylamine + putrescine = S-methyl-5'-thioadenosine + spermidine + H(+)</text>
        <dbReference type="Rhea" id="RHEA:12721"/>
        <dbReference type="ChEBI" id="CHEBI:15378"/>
        <dbReference type="ChEBI" id="CHEBI:17509"/>
        <dbReference type="ChEBI" id="CHEBI:57443"/>
        <dbReference type="ChEBI" id="CHEBI:57834"/>
        <dbReference type="ChEBI" id="CHEBI:326268"/>
        <dbReference type="EC" id="2.5.1.16"/>
    </reaction>
</comment>
<comment type="pathway">
    <text evidence="1">Amine and polyamine biosynthesis; spermidine biosynthesis; spermidine from putrescine: step 1/1.</text>
</comment>
<comment type="subunit">
    <text evidence="1">Homodimer or homotetramer.</text>
</comment>
<comment type="subcellular location">
    <subcellularLocation>
        <location evidence="1">Cytoplasm</location>
    </subcellularLocation>
</comment>
<comment type="similarity">
    <text evidence="1">Belongs to the spermidine/spermine synthase family.</text>
</comment>
<evidence type="ECO:0000255" key="1">
    <source>
        <dbReference type="HAMAP-Rule" id="MF_00198"/>
    </source>
</evidence>
<proteinExistence type="inferred from homology"/>
<keyword id="KW-0963">Cytoplasm</keyword>
<keyword id="KW-0620">Polyamine biosynthesis</keyword>
<keyword id="KW-1185">Reference proteome</keyword>
<keyword id="KW-0745">Spermidine biosynthesis</keyword>
<keyword id="KW-0808">Transferase</keyword>
<accession>P66836</accession>
<accession>Q97RA7</accession>
<protein>
    <recommendedName>
        <fullName evidence="1">Polyamine aminopropyltransferase</fullName>
    </recommendedName>
    <alternativeName>
        <fullName evidence="1">Putrescine aminopropyltransferase</fullName>
        <shortName evidence="1">PAPT</shortName>
    </alternativeName>
    <alternativeName>
        <fullName evidence="1">Spermidine synthase</fullName>
        <shortName evidence="1">SPDS</shortName>
        <shortName evidence="1">SPDSY</shortName>
        <ecNumber evidence="1">2.5.1.16</ecNumber>
    </alternativeName>
</protein>
<organism>
    <name type="scientific">Streptococcus pneumoniae (strain ATCC BAA-255 / R6)</name>
    <dbReference type="NCBI Taxonomy" id="171101"/>
    <lineage>
        <taxon>Bacteria</taxon>
        <taxon>Bacillati</taxon>
        <taxon>Bacillota</taxon>
        <taxon>Bacilli</taxon>
        <taxon>Lactobacillales</taxon>
        <taxon>Streptococcaceae</taxon>
        <taxon>Streptococcus</taxon>
    </lineage>
</organism>
<feature type="chain" id="PRO_0000156511" description="Polyamine aminopropyltransferase">
    <location>
        <begin position="1"/>
        <end position="286"/>
    </location>
</feature>
<feature type="domain" description="PABS" evidence="1">
    <location>
        <begin position="2"/>
        <end position="237"/>
    </location>
</feature>
<feature type="active site" description="Proton acceptor" evidence="1">
    <location>
        <position position="155"/>
    </location>
</feature>
<feature type="binding site" evidence="1">
    <location>
        <position position="31"/>
    </location>
    <ligand>
        <name>S-methyl-5'-thioadenosine</name>
        <dbReference type="ChEBI" id="CHEBI:17509"/>
    </ligand>
</feature>
<feature type="binding site" evidence="1">
    <location>
        <position position="86"/>
    </location>
    <ligand>
        <name>spermidine</name>
        <dbReference type="ChEBI" id="CHEBI:57834"/>
    </ligand>
</feature>
<feature type="binding site" evidence="1">
    <location>
        <position position="106"/>
    </location>
    <ligand>
        <name>S-methyl-5'-thioadenosine</name>
        <dbReference type="ChEBI" id="CHEBI:17509"/>
    </ligand>
</feature>
<feature type="binding site" evidence="1">
    <location>
        <begin position="137"/>
        <end position="138"/>
    </location>
    <ligand>
        <name>S-methyl-5'-thioadenosine</name>
        <dbReference type="ChEBI" id="CHEBI:17509"/>
    </ligand>
</feature>
<dbReference type="EC" id="2.5.1.16" evidence="1"/>
<dbReference type="EMBL" id="AE007317">
    <property type="protein sequence ID" value="AAK99623.1"/>
    <property type="molecule type" value="Genomic_DNA"/>
</dbReference>
<dbReference type="PIR" id="C97974">
    <property type="entry name" value="C97974"/>
</dbReference>
<dbReference type="RefSeq" id="NP_358413.1">
    <property type="nucleotide sequence ID" value="NC_003098.1"/>
</dbReference>
<dbReference type="RefSeq" id="WP_000366713.1">
    <property type="nucleotide sequence ID" value="NC_003098.1"/>
</dbReference>
<dbReference type="SMR" id="P66836"/>
<dbReference type="STRING" id="171101.spr0819"/>
<dbReference type="KEGG" id="spr:spr0819"/>
<dbReference type="PATRIC" id="fig|171101.6.peg.909"/>
<dbReference type="eggNOG" id="COG0421">
    <property type="taxonomic scope" value="Bacteria"/>
</dbReference>
<dbReference type="HOGENOM" id="CLU_048199_0_0_9"/>
<dbReference type="UniPathway" id="UPA00248">
    <property type="reaction ID" value="UER00314"/>
</dbReference>
<dbReference type="Proteomes" id="UP000000586">
    <property type="component" value="Chromosome"/>
</dbReference>
<dbReference type="GO" id="GO:0005829">
    <property type="term" value="C:cytosol"/>
    <property type="evidence" value="ECO:0000318"/>
    <property type="project" value="GO_Central"/>
</dbReference>
<dbReference type="GO" id="GO:0004766">
    <property type="term" value="F:spermidine synthase activity"/>
    <property type="evidence" value="ECO:0000318"/>
    <property type="project" value="GO_Central"/>
</dbReference>
<dbReference type="GO" id="GO:0008295">
    <property type="term" value="P:spermidine biosynthetic process"/>
    <property type="evidence" value="ECO:0000318"/>
    <property type="project" value="GO_Central"/>
</dbReference>
<dbReference type="CDD" id="cd02440">
    <property type="entry name" value="AdoMet_MTases"/>
    <property type="match status" value="1"/>
</dbReference>
<dbReference type="FunFam" id="2.30.140.10:FF:000007">
    <property type="entry name" value="Polyamine aminopropyltransferase"/>
    <property type="match status" value="1"/>
</dbReference>
<dbReference type="FunFam" id="3.40.50.150:FF:000126">
    <property type="entry name" value="Polyamine aminopropyltransferase"/>
    <property type="match status" value="1"/>
</dbReference>
<dbReference type="Gene3D" id="2.30.140.10">
    <property type="entry name" value="Spermidine synthase, tetramerisation domain"/>
    <property type="match status" value="1"/>
</dbReference>
<dbReference type="Gene3D" id="3.40.50.150">
    <property type="entry name" value="Vaccinia Virus protein VP39"/>
    <property type="match status" value="1"/>
</dbReference>
<dbReference type="HAMAP" id="MF_00198">
    <property type="entry name" value="Spermidine_synth"/>
    <property type="match status" value="1"/>
</dbReference>
<dbReference type="InterPro" id="IPR030374">
    <property type="entry name" value="PABS"/>
</dbReference>
<dbReference type="InterPro" id="IPR029063">
    <property type="entry name" value="SAM-dependent_MTases_sf"/>
</dbReference>
<dbReference type="InterPro" id="IPR001045">
    <property type="entry name" value="Spermi_synthase"/>
</dbReference>
<dbReference type="InterPro" id="IPR035246">
    <property type="entry name" value="Spermidine_synt_N"/>
</dbReference>
<dbReference type="InterPro" id="IPR037163">
    <property type="entry name" value="Spermidine_synt_N_sf"/>
</dbReference>
<dbReference type="NCBIfam" id="NF002010">
    <property type="entry name" value="PRK00811.1"/>
    <property type="match status" value="1"/>
</dbReference>
<dbReference type="NCBIfam" id="TIGR00417">
    <property type="entry name" value="speE"/>
    <property type="match status" value="1"/>
</dbReference>
<dbReference type="PANTHER" id="PTHR11558:SF11">
    <property type="entry name" value="SPERMIDINE SYNTHASE"/>
    <property type="match status" value="1"/>
</dbReference>
<dbReference type="PANTHER" id="PTHR11558">
    <property type="entry name" value="SPERMIDINE/SPERMINE SYNTHASE"/>
    <property type="match status" value="1"/>
</dbReference>
<dbReference type="Pfam" id="PF17284">
    <property type="entry name" value="Spermine_synt_N"/>
    <property type="match status" value="1"/>
</dbReference>
<dbReference type="Pfam" id="PF01564">
    <property type="entry name" value="Spermine_synth"/>
    <property type="match status" value="1"/>
</dbReference>
<dbReference type="SUPFAM" id="SSF53335">
    <property type="entry name" value="S-adenosyl-L-methionine-dependent methyltransferases"/>
    <property type="match status" value="1"/>
</dbReference>
<dbReference type="PROSITE" id="PS51006">
    <property type="entry name" value="PABS_2"/>
    <property type="match status" value="1"/>
</dbReference>
<gene>
    <name evidence="1" type="primary">speE</name>
    <name type="ordered locus">spr0819</name>
</gene>
<name>SPEE_STRR6</name>
<reference key="1">
    <citation type="journal article" date="2001" name="J. Bacteriol.">
        <title>Genome of the bacterium Streptococcus pneumoniae strain R6.</title>
        <authorList>
            <person name="Hoskins J."/>
            <person name="Alborn W.E. Jr."/>
            <person name="Arnold J."/>
            <person name="Blaszczak L.C."/>
            <person name="Burgett S."/>
            <person name="DeHoff B.S."/>
            <person name="Estrem S.T."/>
            <person name="Fritz L."/>
            <person name="Fu D.-J."/>
            <person name="Fuller W."/>
            <person name="Geringer C."/>
            <person name="Gilmour R."/>
            <person name="Glass J.S."/>
            <person name="Khoja H."/>
            <person name="Kraft A.R."/>
            <person name="Lagace R.E."/>
            <person name="LeBlanc D.J."/>
            <person name="Lee L.N."/>
            <person name="Lefkowitz E.J."/>
            <person name="Lu J."/>
            <person name="Matsushima P."/>
            <person name="McAhren S.M."/>
            <person name="McHenney M."/>
            <person name="McLeaster K."/>
            <person name="Mundy C.W."/>
            <person name="Nicas T.I."/>
            <person name="Norris F.H."/>
            <person name="O'Gara M."/>
            <person name="Peery R.B."/>
            <person name="Robertson G.T."/>
            <person name="Rockey P."/>
            <person name="Sun P.-M."/>
            <person name="Winkler M.E."/>
            <person name="Yang Y."/>
            <person name="Young-Bellido M."/>
            <person name="Zhao G."/>
            <person name="Zook C.A."/>
            <person name="Baltz R.H."/>
            <person name="Jaskunas S.R."/>
            <person name="Rosteck P.R. Jr."/>
            <person name="Skatrud P.L."/>
            <person name="Glass J.I."/>
        </authorList>
    </citation>
    <scope>NUCLEOTIDE SEQUENCE [LARGE SCALE GENOMIC DNA]</scope>
    <source>
        <strain>ATCC BAA-255 / R6</strain>
    </source>
</reference>
<sequence length="286" mass="32859">MDLWFSEVHTPDVKLSLRTAKQLYAGKSEWQDIEVLDTPAFGKILILNGHVLFSDADDFVYNEMTVHVPMAVHPNPKKVLVIGGGDGGVAQVLTLYPELEQIDIVEPDEMLVEVCREYFPDFAAGLDDPRVTIYYQNGLRFLRNCEDDYDIIINDATDPFGHTEGLFTKEFYGNSYRALKEDGIMIYQHGSPFFDEDESACRSMHRKVNQAFPISRVYQAHIPTSPAGYWLFGFASKKYHPVKDFDKEGWKKRQLFTEYYTANLHVGAFMLPKYVEDILEEEEGKK</sequence>